<name>Y005_NPVAC</name>
<organism>
    <name type="scientific">Autographa californica nuclear polyhedrosis virus</name>
    <name type="common">AcMNPV</name>
    <dbReference type="NCBI Taxonomy" id="46015"/>
    <lineage>
        <taxon>Viruses</taxon>
        <taxon>Viruses incertae sedis</taxon>
        <taxon>Naldaviricetes</taxon>
        <taxon>Lefavirales</taxon>
        <taxon>Baculoviridae</taxon>
        <taxon>Alphabaculovirus</taxon>
        <taxon>Alphabaculovirus aucalifornicae</taxon>
    </lineage>
</organism>
<keyword id="KW-1185">Reference proteome</keyword>
<dbReference type="EMBL" id="M75679">
    <property type="status" value="NOT_ANNOTATED_CDS"/>
    <property type="molecule type" value="Genomic_DNA"/>
</dbReference>
<dbReference type="EMBL" id="L22858">
    <property type="protein sequence ID" value="AAA66635.1"/>
    <property type="molecule type" value="Genomic_DNA"/>
</dbReference>
<dbReference type="PIR" id="E72850">
    <property type="entry name" value="E72850"/>
</dbReference>
<dbReference type="RefSeq" id="NP_054034.1">
    <property type="nucleotide sequence ID" value="NC_001623.1"/>
</dbReference>
<dbReference type="SMR" id="P41420"/>
<dbReference type="GeneID" id="1403837"/>
<dbReference type="KEGG" id="vg:1403837"/>
<dbReference type="OrthoDB" id="21504at10239"/>
<dbReference type="Proteomes" id="UP000008292">
    <property type="component" value="Segment"/>
</dbReference>
<dbReference type="InterPro" id="IPR022556">
    <property type="entry name" value="AcMNPV_Orf5"/>
</dbReference>
<dbReference type="Pfam" id="PF10845">
    <property type="entry name" value="DUF2576"/>
    <property type="match status" value="1"/>
</dbReference>
<protein>
    <recommendedName>
        <fullName>Uncharacterized 12.4 kDa protein in CTL-LEF2 intergenic region</fullName>
    </recommendedName>
    <alternativeName>
        <fullName>ORF5</fullName>
    </alternativeName>
</protein>
<reference key="1">
    <citation type="journal article" date="1991" name="Virology">
        <title>Nucleotide sequence of the Autographa californica nuclear polyhedrosis 9.4 kbp EcoRI-I and -R (polyhedrin gene) region.</title>
        <authorList>
            <person name="Possee R.D."/>
            <person name="Sun T.P."/>
            <person name="Howard S.C."/>
            <person name="Ayres M.D."/>
            <person name="Hill-Perkins M."/>
            <person name="Gearing K.L."/>
        </authorList>
    </citation>
    <scope>NUCLEOTIDE SEQUENCE [GENOMIC DNA]</scope>
    <source>
        <strain>C6</strain>
    </source>
</reference>
<reference key="2">
    <citation type="journal article" date="1994" name="Virology">
        <title>The complete DNA sequence of Autographa californica nuclear polyhedrosis virus.</title>
        <authorList>
            <person name="Ayres M.D."/>
            <person name="Howard S.C."/>
            <person name="Kuzio J."/>
            <person name="Lopez-Ferber M."/>
            <person name="Possee R.D."/>
        </authorList>
    </citation>
    <scope>NUCLEOTIDE SEQUENCE [LARGE SCALE GENOMIC DNA]</scope>
    <source>
        <strain>C6</strain>
    </source>
</reference>
<feature type="chain" id="PRO_0000132944" description="Uncharacterized 12.4 kDa protein in CTL-LEF2 intergenic region">
    <location>
        <begin position="1"/>
        <end position="109"/>
    </location>
</feature>
<organismHost>
    <name type="scientific">Lepidoptera</name>
    <name type="common">butterflies and moths</name>
    <dbReference type="NCBI Taxonomy" id="7088"/>
</organismHost>
<proteinExistence type="predicted"/>
<sequence length="109" mass="12435">MYRTSRINNAPVVASQHDYDRDQIKRELNSLRRNVHDLCTRSGTSFDCNKFLRSDDMTPVVTTITPKRTADYKITEYVGDVKTIKPSNRPLVESGPLVREAAKYGECIV</sequence>
<accession>P41420</accession>